<gene>
    <name evidence="7" type="primary">calE</name>
    <name type="ORF">PENDEC_c013G04259</name>
</gene>
<organism>
    <name type="scientific">Penicillium decumbens</name>
    <dbReference type="NCBI Taxonomy" id="69771"/>
    <lineage>
        <taxon>Eukaryota</taxon>
        <taxon>Fungi</taxon>
        <taxon>Dikarya</taxon>
        <taxon>Ascomycota</taxon>
        <taxon>Pezizomycotina</taxon>
        <taxon>Eurotiomycetes</taxon>
        <taxon>Eurotiomycetidae</taxon>
        <taxon>Eurotiales</taxon>
        <taxon>Aspergillaceae</taxon>
        <taxon>Penicillium</taxon>
    </lineage>
</organism>
<comment type="function">
    <text evidence="5 9">Cytochrome P450 monooxygenase; part of the gene cluster that mediates the biosynthesis of calbistrin A and related compounds. Calbistrin A is a secondary metabolite with an interesting structure that was recently found to have bioactivity against leukemia cells. It consists of two polyketides linked by an ester bond: a bicyclic decalin containing polyketide and a linear 12 carbon dioic acid structure (PubMed:30598828). The polyketide synthase calA is probably responsible for forming the decalin moiety. Because calA lacks a designated enoylreductase (ER) domain, the required activity is provided by the trans-enoyl reductase calK (PubMed:30598828). Following release from the PKS, calF then probably catalyzes the oxidation and the subsequent Diels Alder cycloisomerization that lead to the formation of the decalin moiety (Probable). The decalin polyketide backbone includes two C-methyl groups, at C7 and C11 in backbone, of which the C7 position is probably methylated by the methyltransferase domain of calA. A candidate for adding the methyl group at C11, if not done by CalA, is the cluster methyltransferase calH (Probable). Several additional tailoring enzymes within the cluster could be involved in the modification of the decalin polyketide product. Those include the 3 cytochrome P450 monooxygenases CalE, CalG and CalL, of which one might be responsible for the introduction of the extra hydroxyl group attached to the backbone of the decalin moiety, at position C9 in the backbone, that allows for attachment of the linear moiety (Probable). One tailoring enzyme activity that is expected to be involved in biosynthesis of calbistrin is an acyltransferase for connecting the two polyketide synthase products, and which could be performed by the cluster acyltransferase calJ (Probable). The enzyme responsible for the biosynthesis of the linear moiety, probably a second PKS, has not been identified yet (Probable).</text>
</comment>
<comment type="cofactor">
    <cofactor evidence="1">
        <name>heme</name>
        <dbReference type="ChEBI" id="CHEBI:30413"/>
    </cofactor>
</comment>
<comment type="pathway">
    <text evidence="9">Secondary metabolite biosynthesis.</text>
</comment>
<comment type="subcellular location">
    <subcellularLocation>
        <location evidence="2">Membrane</location>
        <topology evidence="2">Single-pass membrane protein</topology>
    </subcellularLocation>
</comment>
<comment type="induction">
    <text evidence="5">Expression is induced in complex medium (Czapek yeast autolysate medium) supporting calbistrin production.</text>
</comment>
<comment type="biotechnology">
    <text evidence="4 6">Calbistrin A has been reported to possess a number of interesting bioactivities including antifungal active against Candida albicans and cytotoxic toward both healthy and leukemic human cells.</text>
</comment>
<comment type="similarity">
    <text evidence="8">Belongs to the cytochrome P450 family.</text>
</comment>
<sequence>MDLHLDENLSTMDSLMHHYILIAILVASIIAMVVSSYGREHPLSKVPLVTEKSFWDFTGKKARDNFAANARAVIKQGFAKVGASKPFRIISDQGEMLILPPALAHDIRNVDALSHAEFMKDTTCAEVPGFEPYLESTGTTLLTDMTKTKLMSAMKWLTTPLSNSVAKSCRDLFPEDDEWHEVVLKDKLLDLIARLSSVIFLGEEEIREDPAWLRITKEYTVDSFIASHQLRPYPRYLRPFIARFLPQAQKVQAQLREAEAIITPVIERRRAEKAASTTTVERYDSIEWLEQVAEEKGIKYSPAAMQLTLALSAIHTTTDLLTTTMYEILQHPETIQLLRDEVASVVGDGRLKHSSLYNLKLMDSVIKEAQRLKPVLSINMVRMATEDIDLPDGLNIPRGTRLGVSSHASWDPKVFPNPEKFDPYRFVRLREQPGEENVWQLTTTRPEQIAFGHGQHACPGRFLAANEVKIALCHLLLKYDWELSSITMPTAISHGIMLDSDPTVKVNVRSRQSEVVL</sequence>
<protein>
    <recommendedName>
        <fullName evidence="7">Cytochrome P450 monooxygenase calE</fullName>
        <ecNumber evidence="5">1.-.-.-</ecNumber>
    </recommendedName>
    <alternativeName>
        <fullName evidence="7">Calbistrin biosynthesis cluster protein E</fullName>
    </alternativeName>
</protein>
<reference key="1">
    <citation type="journal article" date="2017" name="Nat. Microbiol.">
        <title>Global analysis of biosynthetic gene clusters reveals vast potential of secondary metabolite production in Penicillium species.</title>
        <authorList>
            <person name="Nielsen J.C."/>
            <person name="Grijseels S."/>
            <person name="Prigent S."/>
            <person name="Ji B."/>
            <person name="Dainat J."/>
            <person name="Nielsen K.F."/>
            <person name="Frisvad J.C."/>
            <person name="Workman M."/>
            <person name="Nielsen J."/>
        </authorList>
    </citation>
    <scope>NUCLEOTIDE SEQUENCE [LARGE SCALE GENOMIC DNA]</scope>
    <source>
        <strain>IBT 11843</strain>
    </source>
</reference>
<reference key="2">
    <citation type="journal article" date="1993" name="J. Antibiot.">
        <title>Calbistrins, novel antifungal agents produced by Penicillium restrictum. I. Production, taxonomy of the producing organism and biological activity.</title>
        <authorList>
            <person name="Jackson M."/>
            <person name="Karwowski J.P."/>
            <person name="Humphrey P.E."/>
            <person name="Kohl W.L."/>
            <person name="Barlow G.J."/>
            <person name="Tanaka S.K."/>
        </authorList>
    </citation>
    <scope>BIOTECHNOLOGY</scope>
</reference>
<reference key="3">
    <citation type="journal article" date="2013" name="Molecules">
        <title>Bio-activity and dereplication-based discovery of ophiobolins and other fungal secondary metabolites targeting leukemia cells.</title>
        <authorList>
            <person name="Bladt T.T."/>
            <person name="Duerr C."/>
            <person name="Knudsen P.B."/>
            <person name="Kildgaard S."/>
            <person name="Frisvad J.C."/>
            <person name="Gotfredsen C.H."/>
            <person name="Seiffert M."/>
            <person name="Larsen T.O."/>
        </authorList>
    </citation>
    <scope>BIOTECHNOLOGY</scope>
</reference>
<reference key="4">
    <citation type="journal article" date="2018" name="Fungal Biol. Biotechnol.">
        <title>Identification of the decumbenone biosynthetic gene cluster in Penicillium decumbens and the importance for production of calbistrin.</title>
        <authorList>
            <person name="Grijseels S."/>
            <person name="Pohl C."/>
            <person name="Nielsen J.C."/>
            <person name="Wasil Z."/>
            <person name="Nygaard Y."/>
            <person name="Nielsen J."/>
            <person name="Frisvad J.C."/>
            <person name="Nielsen K.F."/>
            <person name="Workman M."/>
            <person name="Larsen T.O."/>
            <person name="Driessen A.J.M."/>
            <person name="Frandsen R.J.N."/>
        </authorList>
    </citation>
    <scope>IDENTIFICATION</scope>
    <scope>FUNCTION</scope>
    <scope>INDUCTION</scope>
    <scope>PATHWAY</scope>
</reference>
<feature type="chain" id="PRO_0000446458" description="Cytochrome P450 monooxygenase calE">
    <location>
        <begin position="1"/>
        <end position="517"/>
    </location>
</feature>
<feature type="transmembrane region" description="Helical" evidence="2">
    <location>
        <begin position="14"/>
        <end position="34"/>
    </location>
</feature>
<feature type="binding site" description="axial binding residue" evidence="1">
    <location>
        <position position="458"/>
    </location>
    <ligand>
        <name>heme</name>
        <dbReference type="ChEBI" id="CHEBI:30413"/>
    </ligand>
    <ligandPart>
        <name>Fe</name>
        <dbReference type="ChEBI" id="CHEBI:18248"/>
    </ligandPart>
</feature>
<feature type="glycosylation site" description="N-linked (GlcNAc...) asparagine" evidence="3">
    <location>
        <position position="8"/>
    </location>
</feature>
<name>CALE_PENDC</name>
<accession>A0A1V6PB34</accession>
<dbReference type="EC" id="1.-.-.-" evidence="5"/>
<dbReference type="EMBL" id="MDYL01000013">
    <property type="protein sequence ID" value="OQD73977.1"/>
    <property type="molecule type" value="Genomic_DNA"/>
</dbReference>
<dbReference type="SMR" id="A0A1V6PB34"/>
<dbReference type="STRING" id="69771.A0A1V6PB34"/>
<dbReference type="GlyCosmos" id="A0A1V6PB34">
    <property type="glycosylation" value="1 site, No reported glycans"/>
</dbReference>
<dbReference type="OMA" id="IEWFERT"/>
<dbReference type="OrthoDB" id="1844152at2759"/>
<dbReference type="Proteomes" id="UP000191522">
    <property type="component" value="Unassembled WGS sequence"/>
</dbReference>
<dbReference type="GO" id="GO:0016020">
    <property type="term" value="C:membrane"/>
    <property type="evidence" value="ECO:0007669"/>
    <property type="project" value="UniProtKB-SubCell"/>
</dbReference>
<dbReference type="GO" id="GO:0020037">
    <property type="term" value="F:heme binding"/>
    <property type="evidence" value="ECO:0007669"/>
    <property type="project" value="InterPro"/>
</dbReference>
<dbReference type="GO" id="GO:0005506">
    <property type="term" value="F:iron ion binding"/>
    <property type="evidence" value="ECO:0007669"/>
    <property type="project" value="InterPro"/>
</dbReference>
<dbReference type="GO" id="GO:0004497">
    <property type="term" value="F:monooxygenase activity"/>
    <property type="evidence" value="ECO:0007669"/>
    <property type="project" value="UniProtKB-KW"/>
</dbReference>
<dbReference type="GO" id="GO:0016705">
    <property type="term" value="F:oxidoreductase activity, acting on paired donors, with incorporation or reduction of molecular oxygen"/>
    <property type="evidence" value="ECO:0007669"/>
    <property type="project" value="InterPro"/>
</dbReference>
<dbReference type="GO" id="GO:0043386">
    <property type="term" value="P:mycotoxin biosynthetic process"/>
    <property type="evidence" value="ECO:0007669"/>
    <property type="project" value="UniProtKB-ARBA"/>
</dbReference>
<dbReference type="CDD" id="cd11041">
    <property type="entry name" value="CYP503A1-like"/>
    <property type="match status" value="1"/>
</dbReference>
<dbReference type="Gene3D" id="1.10.630.10">
    <property type="entry name" value="Cytochrome P450"/>
    <property type="match status" value="1"/>
</dbReference>
<dbReference type="InterPro" id="IPR001128">
    <property type="entry name" value="Cyt_P450"/>
</dbReference>
<dbReference type="InterPro" id="IPR017972">
    <property type="entry name" value="Cyt_P450_CS"/>
</dbReference>
<dbReference type="InterPro" id="IPR002401">
    <property type="entry name" value="Cyt_P450_E_grp-I"/>
</dbReference>
<dbReference type="InterPro" id="IPR036396">
    <property type="entry name" value="Cyt_P450_sf"/>
</dbReference>
<dbReference type="PANTHER" id="PTHR46206">
    <property type="entry name" value="CYTOCHROME P450"/>
    <property type="match status" value="1"/>
</dbReference>
<dbReference type="PANTHER" id="PTHR46206:SF2">
    <property type="entry name" value="CYTOCHROME P450 MONOOXYGENASE AUSG-RELATED"/>
    <property type="match status" value="1"/>
</dbReference>
<dbReference type="Pfam" id="PF00067">
    <property type="entry name" value="p450"/>
    <property type="match status" value="1"/>
</dbReference>
<dbReference type="PRINTS" id="PR00463">
    <property type="entry name" value="EP450I"/>
</dbReference>
<dbReference type="PRINTS" id="PR00385">
    <property type="entry name" value="P450"/>
</dbReference>
<dbReference type="SUPFAM" id="SSF48264">
    <property type="entry name" value="Cytochrome P450"/>
    <property type="match status" value="1"/>
</dbReference>
<dbReference type="PROSITE" id="PS00086">
    <property type="entry name" value="CYTOCHROME_P450"/>
    <property type="match status" value="1"/>
</dbReference>
<keyword id="KW-0325">Glycoprotein</keyword>
<keyword id="KW-0349">Heme</keyword>
<keyword id="KW-0408">Iron</keyword>
<keyword id="KW-0472">Membrane</keyword>
<keyword id="KW-0479">Metal-binding</keyword>
<keyword id="KW-0503">Monooxygenase</keyword>
<keyword id="KW-0560">Oxidoreductase</keyword>
<keyword id="KW-1185">Reference proteome</keyword>
<keyword id="KW-0812">Transmembrane</keyword>
<keyword id="KW-1133">Transmembrane helix</keyword>
<proteinExistence type="evidence at protein level"/>
<evidence type="ECO:0000250" key="1">
    <source>
        <dbReference type="UniProtKB" id="P04798"/>
    </source>
</evidence>
<evidence type="ECO:0000255" key="2"/>
<evidence type="ECO:0000255" key="3">
    <source>
        <dbReference type="PROSITE-ProRule" id="PRU00498"/>
    </source>
</evidence>
<evidence type="ECO:0000269" key="4">
    <source>
    </source>
</evidence>
<evidence type="ECO:0000269" key="5">
    <source>
    </source>
</evidence>
<evidence type="ECO:0000269" key="6">
    <source>
    </source>
</evidence>
<evidence type="ECO:0000303" key="7">
    <source>
    </source>
</evidence>
<evidence type="ECO:0000305" key="8"/>
<evidence type="ECO:0000305" key="9">
    <source>
    </source>
</evidence>